<evidence type="ECO:0000250" key="1"/>
<evidence type="ECO:0000255" key="2">
    <source>
        <dbReference type="PROSITE-ProRule" id="PRU01133"/>
    </source>
</evidence>
<comment type="function">
    <text evidence="1">Involved in calcium binding and microtubule stabilization.</text>
</comment>
<comment type="subcellular location">
    <subcellularLocation>
        <location evidence="1">Cytoplasm</location>
    </subcellularLocation>
</comment>
<comment type="similarity">
    <text evidence="2">Belongs to the TCTP family.</text>
</comment>
<reference key="1">
    <citation type="submission" date="2001-10" db="EMBL/GenBank/DDBJ databases">
        <authorList>
            <person name="Zhang H."/>
            <person name="Yang H."/>
        </authorList>
    </citation>
    <scope>NUCLEOTIDE SEQUENCE [MRNA]</scope>
</reference>
<feature type="chain" id="PRO_0000211279" description="Translationally-controlled tumor protein homolog">
    <location>
        <begin position="1"/>
        <end position="169"/>
    </location>
</feature>
<feature type="domain" description="TCTP" evidence="2">
    <location>
        <begin position="1"/>
        <end position="169"/>
    </location>
</feature>
<accession>Q95VY2</accession>
<proteinExistence type="evidence at transcript level"/>
<organism>
    <name type="scientific">Branchiostoma belcheri</name>
    <name type="common">Amphioxus</name>
    <dbReference type="NCBI Taxonomy" id="7741"/>
    <lineage>
        <taxon>Eukaryota</taxon>
        <taxon>Metazoa</taxon>
        <taxon>Chordata</taxon>
        <taxon>Cephalochordata</taxon>
        <taxon>Leptocardii</taxon>
        <taxon>Amphioxiformes</taxon>
        <taxon>Branchiostomatidae</taxon>
        <taxon>Branchiostoma</taxon>
    </lineage>
</organism>
<sequence>MIIYKDIVSGDEMFSDAYKMKVLDDYFYELEGKITTEKGGIDESAIGGNASAEDAVEGLEESGTTGCNIVIAQRLQETQFTKAQYKVYIKDYSKKVLEYLTKNKPERVDGFKAASAAGMKRVMGNFKNWQFFTGEKMDQDGMVALMDYREDGKTPYMLFFKDGLEEEKF</sequence>
<protein>
    <recommendedName>
        <fullName>Translationally-controlled tumor protein homolog</fullName>
        <shortName>TCTP</shortName>
    </recommendedName>
</protein>
<dbReference type="EMBL" id="AF397146">
    <property type="protein sequence ID" value="AAK84394.1"/>
    <property type="molecule type" value="mRNA"/>
</dbReference>
<dbReference type="SMR" id="Q95VY2"/>
<dbReference type="Proteomes" id="UP000515135">
    <property type="component" value="Unplaced"/>
</dbReference>
<dbReference type="GO" id="GO:0005737">
    <property type="term" value="C:cytoplasm"/>
    <property type="evidence" value="ECO:0007669"/>
    <property type="project" value="UniProtKB-SubCell"/>
</dbReference>
<dbReference type="GO" id="GO:0005509">
    <property type="term" value="F:calcium ion binding"/>
    <property type="evidence" value="ECO:0007669"/>
    <property type="project" value="TreeGrafter"/>
</dbReference>
<dbReference type="FunFam" id="2.170.150.10:FF:000002">
    <property type="entry name" value="Translationally-controlled tumor protein homolog"/>
    <property type="match status" value="1"/>
</dbReference>
<dbReference type="Gene3D" id="2.170.150.10">
    <property type="entry name" value="Metal Binding Protein, Guanine Nucleotide Exchange Factor, Chain A"/>
    <property type="match status" value="1"/>
</dbReference>
<dbReference type="InterPro" id="IPR011057">
    <property type="entry name" value="Mss4-like_sf"/>
</dbReference>
<dbReference type="InterPro" id="IPR011323">
    <property type="entry name" value="Mss4/transl-control_tumour"/>
</dbReference>
<dbReference type="InterPro" id="IPR034737">
    <property type="entry name" value="TCTP"/>
</dbReference>
<dbReference type="InterPro" id="IPR018103">
    <property type="entry name" value="Translation_control_tumour_CS"/>
</dbReference>
<dbReference type="InterPro" id="IPR018105">
    <property type="entry name" value="Translational_control_tumour_p"/>
</dbReference>
<dbReference type="PANTHER" id="PTHR11991">
    <property type="entry name" value="TRANSLATIONALLY CONTROLLED TUMOR PROTEIN-RELATED"/>
    <property type="match status" value="1"/>
</dbReference>
<dbReference type="PANTHER" id="PTHR11991:SF0">
    <property type="entry name" value="TRANSLATIONALLY-CONTROLLED TUMOR PROTEIN"/>
    <property type="match status" value="1"/>
</dbReference>
<dbReference type="Pfam" id="PF00838">
    <property type="entry name" value="TCTP"/>
    <property type="match status" value="1"/>
</dbReference>
<dbReference type="PRINTS" id="PR01653">
    <property type="entry name" value="TCTPROTEIN"/>
</dbReference>
<dbReference type="SUPFAM" id="SSF51316">
    <property type="entry name" value="Mss4-like"/>
    <property type="match status" value="1"/>
</dbReference>
<dbReference type="PROSITE" id="PS01002">
    <property type="entry name" value="TCTP_1"/>
    <property type="match status" value="1"/>
</dbReference>
<dbReference type="PROSITE" id="PS01003">
    <property type="entry name" value="TCTP_2"/>
    <property type="match status" value="1"/>
</dbReference>
<dbReference type="PROSITE" id="PS51797">
    <property type="entry name" value="TCTP_3"/>
    <property type="match status" value="1"/>
</dbReference>
<name>TCTP_BRABE</name>
<keyword id="KW-0106">Calcium</keyword>
<keyword id="KW-0963">Cytoplasm</keyword>
<keyword id="KW-1185">Reference proteome</keyword>